<name>RL3_PSEA8</name>
<organism>
    <name type="scientific">Pseudomonas aeruginosa (strain LESB58)</name>
    <dbReference type="NCBI Taxonomy" id="557722"/>
    <lineage>
        <taxon>Bacteria</taxon>
        <taxon>Pseudomonadati</taxon>
        <taxon>Pseudomonadota</taxon>
        <taxon>Gammaproteobacteria</taxon>
        <taxon>Pseudomonadales</taxon>
        <taxon>Pseudomonadaceae</taxon>
        <taxon>Pseudomonas</taxon>
    </lineage>
</organism>
<protein>
    <recommendedName>
        <fullName evidence="1">Large ribosomal subunit protein uL3</fullName>
    </recommendedName>
    <alternativeName>
        <fullName evidence="2">50S ribosomal protein L3</fullName>
    </alternativeName>
</protein>
<evidence type="ECO:0000255" key="1">
    <source>
        <dbReference type="HAMAP-Rule" id="MF_01325"/>
    </source>
</evidence>
<evidence type="ECO:0000305" key="2"/>
<gene>
    <name evidence="1" type="primary">rplC</name>
    <name type="ordered locus">PLES_06651</name>
</gene>
<accession>B7V644</accession>
<feature type="chain" id="PRO_1000141904" description="Large ribosomal subunit protein uL3">
    <location>
        <begin position="1"/>
        <end position="211"/>
    </location>
</feature>
<feature type="modified residue" description="N5-methylglutamine" evidence="1">
    <location>
        <position position="150"/>
    </location>
</feature>
<sequence length="211" mass="22592">MTIGVVGRKCGMTRIFTEEGVSIPVTVIEVEPNRVTQFKTEETDGYRAVQVTAGERRASRVTKAQAGHFAKANVAAGRGVWEFRLGEEQYAAGDQITVDLFQAGQMVDVTGESKGKGFAGTIKRWNFRGQDNTHGNSVSHRVPGSIGQCQTPGRVFKGKKMSGHLGAERVTVQSLEIVRVDAERNLLLVKGAVPGATGGDVIVRPAAKARG</sequence>
<comment type="function">
    <text evidence="1">One of the primary rRNA binding proteins, it binds directly near the 3'-end of the 23S rRNA, where it nucleates assembly of the 50S subunit.</text>
</comment>
<comment type="subunit">
    <text evidence="1">Part of the 50S ribosomal subunit. Forms a cluster with proteins L14 and L19.</text>
</comment>
<comment type="PTM">
    <text evidence="1">Methylated by PrmB.</text>
</comment>
<comment type="similarity">
    <text evidence="1">Belongs to the universal ribosomal protein uL3 family.</text>
</comment>
<proteinExistence type="inferred from homology"/>
<dbReference type="EMBL" id="FM209186">
    <property type="protein sequence ID" value="CAW25392.1"/>
    <property type="molecule type" value="Genomic_DNA"/>
</dbReference>
<dbReference type="RefSeq" id="WP_003103877.1">
    <property type="nucleotide sequence ID" value="NC_011770.1"/>
</dbReference>
<dbReference type="SMR" id="B7V644"/>
<dbReference type="GeneID" id="77219198"/>
<dbReference type="KEGG" id="pag:PLES_06651"/>
<dbReference type="HOGENOM" id="CLU_044142_4_1_6"/>
<dbReference type="GO" id="GO:0022625">
    <property type="term" value="C:cytosolic large ribosomal subunit"/>
    <property type="evidence" value="ECO:0007669"/>
    <property type="project" value="TreeGrafter"/>
</dbReference>
<dbReference type="GO" id="GO:0019843">
    <property type="term" value="F:rRNA binding"/>
    <property type="evidence" value="ECO:0007669"/>
    <property type="project" value="UniProtKB-UniRule"/>
</dbReference>
<dbReference type="GO" id="GO:0003735">
    <property type="term" value="F:structural constituent of ribosome"/>
    <property type="evidence" value="ECO:0007669"/>
    <property type="project" value="InterPro"/>
</dbReference>
<dbReference type="GO" id="GO:0006412">
    <property type="term" value="P:translation"/>
    <property type="evidence" value="ECO:0007669"/>
    <property type="project" value="UniProtKB-UniRule"/>
</dbReference>
<dbReference type="FunFam" id="2.40.30.10:FF:000004">
    <property type="entry name" value="50S ribosomal protein L3"/>
    <property type="match status" value="1"/>
</dbReference>
<dbReference type="FunFam" id="3.30.160.810:FF:000001">
    <property type="entry name" value="50S ribosomal protein L3"/>
    <property type="match status" value="1"/>
</dbReference>
<dbReference type="Gene3D" id="3.30.160.810">
    <property type="match status" value="1"/>
</dbReference>
<dbReference type="Gene3D" id="2.40.30.10">
    <property type="entry name" value="Translation factors"/>
    <property type="match status" value="1"/>
</dbReference>
<dbReference type="HAMAP" id="MF_01325_B">
    <property type="entry name" value="Ribosomal_uL3_B"/>
    <property type="match status" value="1"/>
</dbReference>
<dbReference type="InterPro" id="IPR000597">
    <property type="entry name" value="Ribosomal_uL3"/>
</dbReference>
<dbReference type="InterPro" id="IPR019927">
    <property type="entry name" value="Ribosomal_uL3_bac/org-type"/>
</dbReference>
<dbReference type="InterPro" id="IPR019926">
    <property type="entry name" value="Ribosomal_uL3_CS"/>
</dbReference>
<dbReference type="InterPro" id="IPR009000">
    <property type="entry name" value="Transl_B-barrel_sf"/>
</dbReference>
<dbReference type="NCBIfam" id="TIGR03625">
    <property type="entry name" value="L3_bact"/>
    <property type="match status" value="1"/>
</dbReference>
<dbReference type="PANTHER" id="PTHR11229">
    <property type="entry name" value="50S RIBOSOMAL PROTEIN L3"/>
    <property type="match status" value="1"/>
</dbReference>
<dbReference type="PANTHER" id="PTHR11229:SF16">
    <property type="entry name" value="LARGE RIBOSOMAL SUBUNIT PROTEIN UL3C"/>
    <property type="match status" value="1"/>
</dbReference>
<dbReference type="Pfam" id="PF00297">
    <property type="entry name" value="Ribosomal_L3"/>
    <property type="match status" value="1"/>
</dbReference>
<dbReference type="SUPFAM" id="SSF50447">
    <property type="entry name" value="Translation proteins"/>
    <property type="match status" value="1"/>
</dbReference>
<dbReference type="PROSITE" id="PS00474">
    <property type="entry name" value="RIBOSOMAL_L3"/>
    <property type="match status" value="1"/>
</dbReference>
<reference key="1">
    <citation type="journal article" date="2009" name="Genome Res.">
        <title>Newly introduced genomic prophage islands are critical determinants of in vivo competitiveness in the Liverpool epidemic strain of Pseudomonas aeruginosa.</title>
        <authorList>
            <person name="Winstanley C."/>
            <person name="Langille M.G.I."/>
            <person name="Fothergill J.L."/>
            <person name="Kukavica-Ibrulj I."/>
            <person name="Paradis-Bleau C."/>
            <person name="Sanschagrin F."/>
            <person name="Thomson N.R."/>
            <person name="Winsor G.L."/>
            <person name="Quail M.A."/>
            <person name="Lennard N."/>
            <person name="Bignell A."/>
            <person name="Clarke L."/>
            <person name="Seeger K."/>
            <person name="Saunders D."/>
            <person name="Harris D."/>
            <person name="Parkhill J."/>
            <person name="Hancock R.E.W."/>
            <person name="Brinkman F.S.L."/>
            <person name="Levesque R.C."/>
        </authorList>
    </citation>
    <scope>NUCLEOTIDE SEQUENCE [LARGE SCALE GENOMIC DNA]</scope>
    <source>
        <strain>LESB58</strain>
    </source>
</reference>
<keyword id="KW-0488">Methylation</keyword>
<keyword id="KW-0687">Ribonucleoprotein</keyword>
<keyword id="KW-0689">Ribosomal protein</keyword>
<keyword id="KW-0694">RNA-binding</keyword>
<keyword id="KW-0699">rRNA-binding</keyword>